<gene>
    <name type="primary">RHA2</name>
</gene>
<protein>
    <recommendedName>
        <fullName>Rhodotorucin-A peptides type 2</fullName>
    </recommendedName>
    <component>
        <recommendedName>
            <fullName>Rhodotorucin-A</fullName>
        </recommendedName>
        <alternativeName>
            <fullName>Rhodotorucine-A</fullName>
        </alternativeName>
    </component>
</protein>
<accession>P20465</accession>
<name>RHA2_RHOTO</name>
<evidence type="ECO:0000269" key="1">
    <source ref="2"/>
</evidence>
<evidence type="ECO:0000305" key="2"/>
<proteinExistence type="evidence at protein level"/>
<keyword id="KW-1003">Cell membrane</keyword>
<keyword id="KW-0449">Lipoprotein</keyword>
<keyword id="KW-0472">Membrane</keyword>
<keyword id="KW-0588">Pheromone</keyword>
<keyword id="KW-0636">Prenylation</keyword>
<organism>
    <name type="scientific">Rhodotorula toruloides</name>
    <name type="common">Yeast</name>
    <name type="synonym">Rhodosporidium toruloides</name>
    <dbReference type="NCBI Taxonomy" id="5286"/>
    <lineage>
        <taxon>Eukaryota</taxon>
        <taxon>Fungi</taxon>
        <taxon>Dikarya</taxon>
        <taxon>Basidiomycota</taxon>
        <taxon>Pucciniomycotina</taxon>
        <taxon>Microbotryomycetes</taxon>
        <taxon>Sporidiobolales</taxon>
        <taxon>Sporidiobolaceae</taxon>
        <taxon>Rhodotorula</taxon>
    </lineage>
</organism>
<comment type="function">
    <text>Rhodotorucin-A is a mating pheromone in cells of mating type A of Rhodosporidium toruloides.</text>
</comment>
<comment type="subcellular location">
    <subcellularLocation>
        <location evidence="2">Cell membrane</location>
        <topology evidence="2">Lipid-anchor</topology>
        <orientation evidence="2">Cytoplasmic side</orientation>
    </subcellularLocation>
</comment>
<dbReference type="EMBL" id="M28122">
    <property type="protein sequence ID" value="AAA77661.1"/>
    <property type="molecule type" value="Genomic_DNA"/>
</dbReference>
<dbReference type="PIR" id="B32824">
    <property type="entry name" value="B32824"/>
</dbReference>
<dbReference type="GO" id="GO:0005886">
    <property type="term" value="C:plasma membrane"/>
    <property type="evidence" value="ECO:0007669"/>
    <property type="project" value="UniProtKB-SubCell"/>
</dbReference>
<dbReference type="GO" id="GO:0005186">
    <property type="term" value="F:pheromone activity"/>
    <property type="evidence" value="ECO:0007669"/>
    <property type="project" value="UniProtKB-KW"/>
</dbReference>
<sequence>MVAYPEISWTRNGCTVAKYPEISWTRNGCTVSKYPEISWTRNGCTVSKYPEISWTRNGCTVSKYPEISWTRNGCTVA</sequence>
<reference key="1">
    <citation type="journal article" date="1989" name="Mol. Cell. Biol.">
        <title>Multiple genes coding for precursors of rhodotorucine A, a farnesyl peptide mating pheromone of the basidiomycetous yeast Rhodosporidium toruloides.</title>
        <authorList>
            <person name="Akada R."/>
            <person name="Minomi K."/>
            <person name="Kai J."/>
            <person name="Yamashita I."/>
            <person name="Miyakawa T."/>
            <person name="Fukui S."/>
        </authorList>
    </citation>
    <scope>NUCLEOTIDE SEQUENCE [GENOMIC DNA]</scope>
    <source>
        <strain>IFO 0559-M919</strain>
    </source>
</reference>
<reference key="2">
    <citation type="journal article" date="1978" name="Biochem. Biophys. Res. Commun.">
        <title>Structure of rhodotorucine A, a novel lipopeptide, inducing mating tube formation in Rhodosporidium toruloides.</title>
        <authorList>
            <person name="Kamiya Y."/>
            <person name="Sakurai A."/>
            <person name="Tamura S."/>
            <person name="Takahashi N."/>
            <person name="Abe K."/>
            <person name="Tsuchiya E."/>
            <person name="Fukui S."/>
            <person name="Kitada C."/>
            <person name="Fujino M."/>
        </authorList>
    </citation>
    <scope>ISOPRENYLATION AT CYS-14; CYS-29; CYS-44; CYS-59 AND CYS-74</scope>
</reference>
<feature type="propeptide" id="PRO_0000239413">
    <location>
        <begin position="1"/>
        <end position="3"/>
    </location>
</feature>
<feature type="peptide" id="PRO_0000022233" description="Rhodotorucin-A">
    <location>
        <begin position="4"/>
        <end position="14"/>
    </location>
</feature>
<feature type="propeptide" id="PRO_0000239414">
    <location>
        <begin position="15"/>
        <end position="18"/>
    </location>
</feature>
<feature type="peptide" id="PRO_0000022234" description="Rhodotorucin-A">
    <location>
        <begin position="19"/>
        <end position="29"/>
    </location>
</feature>
<feature type="propeptide" id="PRO_0000239415">
    <location>
        <begin position="30"/>
        <end position="33"/>
    </location>
</feature>
<feature type="peptide" id="PRO_0000022235" description="Rhodotorucin-A">
    <location>
        <begin position="34"/>
        <end position="44"/>
    </location>
</feature>
<feature type="propeptide" id="PRO_0000239416">
    <location>
        <begin position="45"/>
        <end position="48"/>
    </location>
</feature>
<feature type="peptide" id="PRO_0000022236" description="Rhodotorucin-A">
    <location>
        <begin position="49"/>
        <end position="59"/>
    </location>
</feature>
<feature type="propeptide" id="PRO_0000239417">
    <location>
        <begin position="60"/>
        <end position="63"/>
    </location>
</feature>
<feature type="peptide" id="PRO_0000022237" description="Rhodotorucin-A">
    <location>
        <begin position="64"/>
        <end position="74"/>
    </location>
</feature>
<feature type="propeptide" id="PRO_0000239418">
    <location>
        <begin position="75"/>
        <end position="77"/>
    </location>
</feature>
<feature type="site" description="Not methylated">
    <location>
        <position position="14"/>
    </location>
</feature>
<feature type="site" description="Not methylated">
    <location>
        <position position="29"/>
    </location>
</feature>
<feature type="site" description="Not methylated">
    <location>
        <position position="44"/>
    </location>
</feature>
<feature type="site" description="Not methylated">
    <location>
        <position position="59"/>
    </location>
</feature>
<feature type="site" description="Not methylated">
    <location>
        <position position="74"/>
    </location>
</feature>
<feature type="lipid moiety-binding region" description="S-farnesyl cysteine" evidence="1">
    <location>
        <position position="14"/>
    </location>
</feature>
<feature type="lipid moiety-binding region" description="S-farnesyl cysteine" evidence="1">
    <location>
        <position position="29"/>
    </location>
</feature>
<feature type="lipid moiety-binding region" description="S-farnesyl cysteine" evidence="1">
    <location>
        <position position="44"/>
    </location>
</feature>
<feature type="lipid moiety-binding region" description="S-farnesyl cysteine" evidence="1">
    <location>
        <position position="59"/>
    </location>
</feature>
<feature type="lipid moiety-binding region" description="S-farnesyl cysteine" evidence="1">
    <location>
        <position position="74"/>
    </location>
</feature>